<dbReference type="EMBL" id="AL123456">
    <property type="protein sequence ID" value="CCP43445.1"/>
    <property type="molecule type" value="Genomic_DNA"/>
</dbReference>
<dbReference type="PIR" id="H70641">
    <property type="entry name" value="H70641"/>
</dbReference>
<dbReference type="RefSeq" id="NP_215215.1">
    <property type="nucleotide sequence ID" value="NC_000962.3"/>
</dbReference>
<dbReference type="RefSeq" id="WP_003403579.1">
    <property type="nucleotide sequence ID" value="NZ_NVQJ01000007.1"/>
</dbReference>
<dbReference type="PDB" id="5V7Q">
    <property type="method" value="EM"/>
    <property type="resolution" value="3.70 A"/>
    <property type="chains" value="D=1-217"/>
</dbReference>
<dbReference type="PDB" id="5V93">
    <property type="method" value="EM"/>
    <property type="resolution" value="4.00 A"/>
    <property type="chains" value="D=1-217"/>
</dbReference>
<dbReference type="PDB" id="7KGB">
    <property type="method" value="EM"/>
    <property type="resolution" value="2.70 A"/>
    <property type="chains" value="D=1-217"/>
</dbReference>
<dbReference type="PDB" id="7MSC">
    <property type="method" value="EM"/>
    <property type="resolution" value="2.97 A"/>
    <property type="chains" value="D=1-217"/>
</dbReference>
<dbReference type="PDB" id="7MSH">
    <property type="method" value="EM"/>
    <property type="resolution" value="3.23 A"/>
    <property type="chains" value="D=1-217"/>
</dbReference>
<dbReference type="PDB" id="7MSM">
    <property type="method" value="EM"/>
    <property type="resolution" value="2.79 A"/>
    <property type="chains" value="D=1-217"/>
</dbReference>
<dbReference type="PDB" id="7MSZ">
    <property type="method" value="EM"/>
    <property type="resolution" value="3.10 A"/>
    <property type="chains" value="D=1-217"/>
</dbReference>
<dbReference type="PDB" id="7MT2">
    <property type="method" value="EM"/>
    <property type="resolution" value="2.76 A"/>
    <property type="chains" value="D=1-217"/>
</dbReference>
<dbReference type="PDB" id="7MT3">
    <property type="method" value="EM"/>
    <property type="resolution" value="2.80 A"/>
    <property type="chains" value="D=1-217"/>
</dbReference>
<dbReference type="PDB" id="7MT7">
    <property type="method" value="EM"/>
    <property type="resolution" value="2.71 A"/>
    <property type="chains" value="D=1-217"/>
</dbReference>
<dbReference type="PDB" id="7SFR">
    <property type="method" value="EM"/>
    <property type="resolution" value="2.60 A"/>
    <property type="chains" value="D=2-214"/>
</dbReference>
<dbReference type="PDBsum" id="5V7Q"/>
<dbReference type="PDBsum" id="5V93"/>
<dbReference type="PDBsum" id="7KGB"/>
<dbReference type="PDBsum" id="7MSC"/>
<dbReference type="PDBsum" id="7MSH"/>
<dbReference type="PDBsum" id="7MSM"/>
<dbReference type="PDBsum" id="7MSZ"/>
<dbReference type="PDBsum" id="7MT2"/>
<dbReference type="PDBsum" id="7MT3"/>
<dbReference type="PDBsum" id="7MT7"/>
<dbReference type="PDBsum" id="7SFR"/>
<dbReference type="EMDB" id="EMD-22865"/>
<dbReference type="EMDB" id="EMD-23961"/>
<dbReference type="EMDB" id="EMD-23962"/>
<dbReference type="EMDB" id="EMD-23969"/>
<dbReference type="EMDB" id="EMD-23972"/>
<dbReference type="EMDB" id="EMD-23974"/>
<dbReference type="EMDB" id="EMD-23975"/>
<dbReference type="EMDB" id="EMD-23976"/>
<dbReference type="EMDB" id="EMD-8645"/>
<dbReference type="SMR" id="P9WH87"/>
<dbReference type="FunCoup" id="P9WH87">
    <property type="interactions" value="523"/>
</dbReference>
<dbReference type="STRING" id="83332.Rv0701"/>
<dbReference type="PaxDb" id="83332-Rv0701"/>
<dbReference type="DNASU" id="888343"/>
<dbReference type="GeneID" id="45424666"/>
<dbReference type="GeneID" id="888343"/>
<dbReference type="KEGG" id="mtu:Rv0701"/>
<dbReference type="KEGG" id="mtv:RVBD_0701"/>
<dbReference type="TubercuList" id="Rv0701"/>
<dbReference type="eggNOG" id="COG0087">
    <property type="taxonomic scope" value="Bacteria"/>
</dbReference>
<dbReference type="InParanoid" id="P9WH87"/>
<dbReference type="OrthoDB" id="9806135at2"/>
<dbReference type="PhylomeDB" id="P9WH87"/>
<dbReference type="PRO" id="PR:P9WH87"/>
<dbReference type="Proteomes" id="UP000001584">
    <property type="component" value="Chromosome"/>
</dbReference>
<dbReference type="GO" id="GO:0005829">
    <property type="term" value="C:cytosol"/>
    <property type="evidence" value="ECO:0007005"/>
    <property type="project" value="MTBBASE"/>
</dbReference>
<dbReference type="GO" id="GO:0022625">
    <property type="term" value="C:cytosolic large ribosomal subunit"/>
    <property type="evidence" value="ECO:0000318"/>
    <property type="project" value="GO_Central"/>
</dbReference>
<dbReference type="GO" id="GO:0005886">
    <property type="term" value="C:plasma membrane"/>
    <property type="evidence" value="ECO:0007005"/>
    <property type="project" value="MTBBASE"/>
</dbReference>
<dbReference type="GO" id="GO:0019843">
    <property type="term" value="F:rRNA binding"/>
    <property type="evidence" value="ECO:0007669"/>
    <property type="project" value="UniProtKB-UniRule"/>
</dbReference>
<dbReference type="GO" id="GO:0003735">
    <property type="term" value="F:structural constituent of ribosome"/>
    <property type="evidence" value="ECO:0000318"/>
    <property type="project" value="GO_Central"/>
</dbReference>
<dbReference type="GO" id="GO:0006412">
    <property type="term" value="P:translation"/>
    <property type="evidence" value="ECO:0007669"/>
    <property type="project" value="UniProtKB-UniRule"/>
</dbReference>
<dbReference type="FunFam" id="2.40.30.10:FF:000004">
    <property type="entry name" value="50S ribosomal protein L3"/>
    <property type="match status" value="1"/>
</dbReference>
<dbReference type="FunFam" id="3.30.160.810:FF:000001">
    <property type="entry name" value="50S ribosomal protein L3"/>
    <property type="match status" value="1"/>
</dbReference>
<dbReference type="Gene3D" id="3.30.160.810">
    <property type="match status" value="1"/>
</dbReference>
<dbReference type="Gene3D" id="2.40.30.10">
    <property type="entry name" value="Translation factors"/>
    <property type="match status" value="1"/>
</dbReference>
<dbReference type="HAMAP" id="MF_01325_B">
    <property type="entry name" value="Ribosomal_uL3_B"/>
    <property type="match status" value="1"/>
</dbReference>
<dbReference type="InterPro" id="IPR000597">
    <property type="entry name" value="Ribosomal_uL3"/>
</dbReference>
<dbReference type="InterPro" id="IPR019927">
    <property type="entry name" value="Ribosomal_uL3_bac/org-type"/>
</dbReference>
<dbReference type="InterPro" id="IPR019926">
    <property type="entry name" value="Ribosomal_uL3_CS"/>
</dbReference>
<dbReference type="InterPro" id="IPR009000">
    <property type="entry name" value="Transl_B-barrel_sf"/>
</dbReference>
<dbReference type="NCBIfam" id="TIGR03625">
    <property type="entry name" value="L3_bact"/>
    <property type="match status" value="1"/>
</dbReference>
<dbReference type="PANTHER" id="PTHR11229">
    <property type="entry name" value="50S RIBOSOMAL PROTEIN L3"/>
    <property type="match status" value="1"/>
</dbReference>
<dbReference type="PANTHER" id="PTHR11229:SF16">
    <property type="entry name" value="LARGE RIBOSOMAL SUBUNIT PROTEIN UL3C"/>
    <property type="match status" value="1"/>
</dbReference>
<dbReference type="Pfam" id="PF00297">
    <property type="entry name" value="Ribosomal_L3"/>
    <property type="match status" value="1"/>
</dbReference>
<dbReference type="SUPFAM" id="SSF50447">
    <property type="entry name" value="Translation proteins"/>
    <property type="match status" value="1"/>
</dbReference>
<dbReference type="PROSITE" id="PS00474">
    <property type="entry name" value="RIBOSOMAL_L3"/>
    <property type="match status" value="1"/>
</dbReference>
<evidence type="ECO:0000255" key="1">
    <source>
        <dbReference type="HAMAP-Rule" id="MF_01325"/>
    </source>
</evidence>
<evidence type="ECO:0000305" key="2"/>
<comment type="function">
    <text evidence="1">One of the primary rRNA binding proteins, it binds directly near the 3'-end of the 23S rRNA, where it nucleates assembly of the 50S subunit.</text>
</comment>
<comment type="subunit">
    <text evidence="1">Part of the 50S ribosomal subunit. Forms a cluster with proteins L14 and L19.</text>
</comment>
<comment type="similarity">
    <text evidence="1">Belongs to the universal ribosomal protein uL3 family.</text>
</comment>
<gene>
    <name evidence="1" type="primary">rplC</name>
    <name type="ordered locus">Rv0701</name>
    <name type="ORF">MTCY210.20</name>
</gene>
<protein>
    <recommendedName>
        <fullName evidence="1">Large ribosomal subunit protein uL3</fullName>
    </recommendedName>
    <alternativeName>
        <fullName evidence="2">50S ribosomal protein L3</fullName>
    </alternativeName>
</protein>
<reference key="1">
    <citation type="journal article" date="1998" name="Nature">
        <title>Deciphering the biology of Mycobacterium tuberculosis from the complete genome sequence.</title>
        <authorList>
            <person name="Cole S.T."/>
            <person name="Brosch R."/>
            <person name="Parkhill J."/>
            <person name="Garnier T."/>
            <person name="Churcher C.M."/>
            <person name="Harris D.E."/>
            <person name="Gordon S.V."/>
            <person name="Eiglmeier K."/>
            <person name="Gas S."/>
            <person name="Barry C.E. III"/>
            <person name="Tekaia F."/>
            <person name="Badcock K."/>
            <person name="Basham D."/>
            <person name="Brown D."/>
            <person name="Chillingworth T."/>
            <person name="Connor R."/>
            <person name="Davies R.M."/>
            <person name="Devlin K."/>
            <person name="Feltwell T."/>
            <person name="Gentles S."/>
            <person name="Hamlin N."/>
            <person name="Holroyd S."/>
            <person name="Hornsby T."/>
            <person name="Jagels K."/>
            <person name="Krogh A."/>
            <person name="McLean J."/>
            <person name="Moule S."/>
            <person name="Murphy L.D."/>
            <person name="Oliver S."/>
            <person name="Osborne J."/>
            <person name="Quail M.A."/>
            <person name="Rajandream M.A."/>
            <person name="Rogers J."/>
            <person name="Rutter S."/>
            <person name="Seeger K."/>
            <person name="Skelton S."/>
            <person name="Squares S."/>
            <person name="Squares R."/>
            <person name="Sulston J.E."/>
            <person name="Taylor K."/>
            <person name="Whitehead S."/>
            <person name="Barrell B.G."/>
        </authorList>
    </citation>
    <scope>NUCLEOTIDE SEQUENCE [LARGE SCALE GENOMIC DNA]</scope>
    <source>
        <strain>ATCC 25618 / H37Rv</strain>
    </source>
</reference>
<reference key="2">
    <citation type="journal article" date="2011" name="Mol. Cell. Proteomics">
        <title>Proteogenomic analysis of Mycobacterium tuberculosis by high resolution mass spectrometry.</title>
        <authorList>
            <person name="Kelkar D.S."/>
            <person name="Kumar D."/>
            <person name="Kumar P."/>
            <person name="Balakrishnan L."/>
            <person name="Muthusamy B."/>
            <person name="Yadav A.K."/>
            <person name="Shrivastava P."/>
            <person name="Marimuthu A."/>
            <person name="Anand S."/>
            <person name="Sundaram H."/>
            <person name="Kingsbury R."/>
            <person name="Harsha H.C."/>
            <person name="Nair B."/>
            <person name="Prasad T.S."/>
            <person name="Chauhan D.S."/>
            <person name="Katoch K."/>
            <person name="Katoch V.M."/>
            <person name="Kumar P."/>
            <person name="Chaerkady R."/>
            <person name="Ramachandran S."/>
            <person name="Dash D."/>
            <person name="Pandey A."/>
        </authorList>
    </citation>
    <scope>IDENTIFICATION BY MASS SPECTROMETRY [LARGE SCALE ANALYSIS]</scope>
    <source>
        <strain>ATCC 25618 / H37Rv</strain>
    </source>
</reference>
<name>RL3_MYCTU</name>
<sequence length="217" mass="23090">MARKGILGTKLGMTQVFDESNRVVPVTVVKAGPNVVTRIRTPERDGYSAVQLAYGEISPRKVNKPLTGQYTAAGVNPRRYLAELRLDDSDAATEYQVGQELTAEIFADGSYVDVTGTSKGKGFAGTMKRHGFRGQGASHGAQAVHRRPGSIGGCATPARVFKGTRMAGRMGNDRVTVLNLLVHKVDAENGVLLIKGAVPGRTGGLVMVRSAIKRGEK</sequence>
<accession>P9WH87</accession>
<accession>L0T4G4</accession>
<accession>O06044</accession>
<accession>P60442</accession>
<accession>P95049</accession>
<organism>
    <name type="scientific">Mycobacterium tuberculosis (strain ATCC 25618 / H37Rv)</name>
    <dbReference type="NCBI Taxonomy" id="83332"/>
    <lineage>
        <taxon>Bacteria</taxon>
        <taxon>Bacillati</taxon>
        <taxon>Actinomycetota</taxon>
        <taxon>Actinomycetes</taxon>
        <taxon>Mycobacteriales</taxon>
        <taxon>Mycobacteriaceae</taxon>
        <taxon>Mycobacterium</taxon>
        <taxon>Mycobacterium tuberculosis complex</taxon>
    </lineage>
</organism>
<keyword id="KW-0002">3D-structure</keyword>
<keyword id="KW-1185">Reference proteome</keyword>
<keyword id="KW-0687">Ribonucleoprotein</keyword>
<keyword id="KW-0689">Ribosomal protein</keyword>
<keyword id="KW-0694">RNA-binding</keyword>
<keyword id="KW-0699">rRNA-binding</keyword>
<feature type="chain" id="PRO_0000077125" description="Large ribosomal subunit protein uL3">
    <location>
        <begin position="1"/>
        <end position="217"/>
    </location>
</feature>
<proteinExistence type="evidence at protein level"/>